<dbReference type="EMBL" id="M55698">
    <property type="protein sequence ID" value="AAA46842.1"/>
    <property type="molecule type" value="Genomic_RNA"/>
</dbReference>
<dbReference type="EMBL" id="X57559">
    <property type="protein sequence ID" value="CAA40786.1"/>
    <property type="molecule type" value="Genomic_DNA"/>
</dbReference>
<dbReference type="PIR" id="A37078">
    <property type="entry name" value="VGNZP2"/>
</dbReference>
<dbReference type="SMR" id="P26629"/>
<dbReference type="GlyCosmos" id="P26629">
    <property type="glycosylation" value="6 sites, No reported glycans"/>
</dbReference>
<dbReference type="KEGG" id="vg:935186"/>
<dbReference type="Proteomes" id="UP000000472">
    <property type="component" value="Segment"/>
</dbReference>
<dbReference type="GO" id="GO:0020002">
    <property type="term" value="C:host cell plasma membrane"/>
    <property type="evidence" value="ECO:0007669"/>
    <property type="project" value="UniProtKB-SubCell"/>
</dbReference>
<dbReference type="GO" id="GO:0016020">
    <property type="term" value="C:membrane"/>
    <property type="evidence" value="ECO:0007669"/>
    <property type="project" value="UniProtKB-KW"/>
</dbReference>
<dbReference type="GO" id="GO:0019031">
    <property type="term" value="C:viral envelope"/>
    <property type="evidence" value="ECO:0007669"/>
    <property type="project" value="UniProtKB-KW"/>
</dbReference>
<dbReference type="GO" id="GO:0055036">
    <property type="term" value="C:virion membrane"/>
    <property type="evidence" value="ECO:0007669"/>
    <property type="project" value="UniProtKB-SubCell"/>
</dbReference>
<dbReference type="GO" id="GO:0019064">
    <property type="term" value="P:fusion of virus membrane with host plasma membrane"/>
    <property type="evidence" value="ECO:0007669"/>
    <property type="project" value="UniProtKB-KW"/>
</dbReference>
<dbReference type="GO" id="GO:0046718">
    <property type="term" value="P:symbiont entry into host cell"/>
    <property type="evidence" value="ECO:0007669"/>
    <property type="project" value="UniProtKB-KW"/>
</dbReference>
<dbReference type="Gene3D" id="1.20.5.300">
    <property type="match status" value="1"/>
</dbReference>
<dbReference type="Gene3D" id="6.10.10.110">
    <property type="match status" value="1"/>
</dbReference>
<dbReference type="Gene3D" id="2.60.40.1690">
    <property type="entry name" value="Head and neck region of the ectodomain of NDV fusion glycoprotein"/>
    <property type="match status" value="1"/>
</dbReference>
<dbReference type="Gene3D" id="2.40.490.10">
    <property type="entry name" value="Newcastle disease virus like domain"/>
    <property type="match status" value="1"/>
</dbReference>
<dbReference type="InterPro" id="IPR000776">
    <property type="entry name" value="Fusion_F0_Paramyxovir"/>
</dbReference>
<dbReference type="Pfam" id="PF00523">
    <property type="entry name" value="Fusion_gly"/>
    <property type="match status" value="1"/>
</dbReference>
<dbReference type="SUPFAM" id="SSF69922">
    <property type="entry name" value="Head and neck region of the ectodomain of NDV fusion glycoprotein"/>
    <property type="match status" value="1"/>
</dbReference>
<dbReference type="SUPFAM" id="SSF58069">
    <property type="entry name" value="Virus ectodomain"/>
    <property type="match status" value="1"/>
</dbReference>
<gene>
    <name type="primary">F</name>
</gene>
<evidence type="ECO:0000250" key="1"/>
<evidence type="ECO:0000255" key="2"/>
<evidence type="ECO:0000305" key="3"/>
<organismHost>
    <name type="scientific">Homo sapiens</name>
    <name type="common">Human</name>
    <dbReference type="NCBI Taxonomy" id="9606"/>
</organismHost>
<organism>
    <name type="scientific">Human parainfluenza 2 virus (strain Toshiba)</name>
    <name type="common">HPIV-2</name>
    <dbReference type="NCBI Taxonomy" id="11214"/>
    <lineage>
        <taxon>Viruses</taxon>
        <taxon>Riboviria</taxon>
        <taxon>Orthornavirae</taxon>
        <taxon>Negarnaviricota</taxon>
        <taxon>Haploviricotina</taxon>
        <taxon>Monjiviricetes</taxon>
        <taxon>Mononegavirales</taxon>
        <taxon>Paramyxoviridae</taxon>
        <taxon>Rubulavirinae</taxon>
        <taxon>Orthorubulavirus</taxon>
        <taxon>Orthorubulavirus laryngotracheitidis</taxon>
        <taxon>Human parainfluenza 2 virus</taxon>
    </lineage>
</organism>
<keyword id="KW-0165">Cleavage on pair of basic residues</keyword>
<keyword id="KW-0175">Coiled coil</keyword>
<keyword id="KW-1015">Disulfide bond</keyword>
<keyword id="KW-1169">Fusion of virus membrane with host cell membrane</keyword>
<keyword id="KW-1168">Fusion of virus membrane with host membrane</keyword>
<keyword id="KW-0325">Glycoprotein</keyword>
<keyword id="KW-1032">Host cell membrane</keyword>
<keyword id="KW-1043">Host membrane</keyword>
<keyword id="KW-0472">Membrane</keyword>
<keyword id="KW-1185">Reference proteome</keyword>
<keyword id="KW-0732">Signal</keyword>
<keyword id="KW-0812">Transmembrane</keyword>
<keyword id="KW-1133">Transmembrane helix</keyword>
<keyword id="KW-0261">Viral envelope protein</keyword>
<keyword id="KW-1162">Viral penetration into host cytoplasm</keyword>
<keyword id="KW-0946">Virion</keyword>
<keyword id="KW-1160">Virus entry into host cell</keyword>
<protein>
    <recommendedName>
        <fullName>Fusion glycoprotein F0</fullName>
    </recommendedName>
    <component>
        <recommendedName>
            <fullName>Fusion glycoprotein F2</fullName>
        </recommendedName>
    </component>
    <component>
        <recommendedName>
            <fullName>Fusion glycoprotein F1</fullName>
        </recommendedName>
    </component>
</protein>
<accession>P26629</accession>
<sequence length="551" mass="59721">MHHLHPMIVCIFVMYTGIVGSDAIAGDQLLNIGVIQSKIRSLMYYTDGGASFIVVKLLPNLPPSNGTCNITSLDAYNVTLFKLLTPLIENLSKISTVTDTKTRQKRFAGVVVGLAALGVATAAQITAAVAIVKANANAAAINNLASSIQSTNKAVSDVIDASRTIATAVQAIQDRINGAIVNGITSASCRAHDALIGSILNLYLTELTTIFHNQITNPALTPLSIQALRILLGSTLPIVIESKLNTNFNTAELLSSGLLTGQIISISPMYMQMLIQINVPTFIMQPGAKVIDLIAISANHKLQEVVVQVPNRILEYANELQNYPANDCVVTPNSVFCRYNEGSPIPESQYQCLRGNLNSCTFTPIIGNFLKRFAFANGVLYANCKSLLCRCADPPHVVSQDDTQGISIIDIKRCSEMMLDTFSFRITSTFNATYVTDFSMINANIVHLSPLDLSNQINSINKSLKSAEDWIADSNFFANQARTAKTLYSLSAIALILSVITLVVVGLLIAYIIKLVSQIHQFRSLAATTMFHRENPAFFSKNNHGNIYGIS</sequence>
<name>FUS_PI2HT</name>
<reference key="1">
    <citation type="journal article" date="1990" name="Virology">
        <title>Sequence of the fusion protein gene of human parainfluenza type 2 virus and its 3' intergenic region: lack of small hydrophobic (SH) gene.</title>
        <authorList>
            <person name="Kawano M."/>
            <person name="Bando H."/>
            <person name="Ohgimoto S."/>
            <person name="Kondo K."/>
            <person name="Tsurudome M."/>
            <person name="Nishio M."/>
            <person name="Ito Y."/>
        </authorList>
    </citation>
    <scope>NUCLEOTIDE SEQUENCE [GENOMIC RNA]</scope>
</reference>
<comment type="function">
    <text evidence="1">Class I viral fusion protein. Under the current model, the protein has at least 3 conformational states: pre-fusion native state, pre-hairpin intermediate state, and post-fusion hairpin state. During viral and plasma cell membrane fusion, the heptad repeat (HR) regions assume a trimer-of-hairpins structure, positioning the fusion peptide in close proximity to the C-terminal region of the ectodomain. The formation of this structure appears to drive apposition and subsequent fusion of viral and plasma cell membranes. Directs fusion of viral and cellular membranes leading to delivery of the nucleocapsid into the cytoplasm. This fusion is pH independent and occurs directly at the outer cell membrane. The trimer of F1-F2 (F protein) probably interacts with HN at the virion surface. Upon HN binding to its cellular receptor, the hydrophobic fusion peptide is unmasked and interacts with the cellular membrane, inducing the fusion between cell and virion membranes. Later in infection, F proteins expressed at the plasma membrane of infected cells could mediate fusion with adjacent cells to form syncytia, a cytopathic effect that could lead to tissue necrosis (By similarity).</text>
</comment>
<comment type="subunit">
    <text evidence="1">Homotrimer of disulfide-linked F1-F2.</text>
</comment>
<comment type="subcellular location">
    <subcellularLocation>
        <location evidence="1">Virion membrane</location>
        <topology evidence="1">Single-pass type I membrane protein</topology>
    </subcellularLocation>
    <subcellularLocation>
        <location evidence="1">Host cell membrane</location>
        <topology evidence="1">Single-pass membrane protein</topology>
    </subcellularLocation>
</comment>
<comment type="PTM">
    <text evidence="1">The inactive precursor F0 is glycosylated and proteolytically cleaved into F1 and F2 to be functionally active. The cleavage is mediated by cellular proteases during the transport and maturation of the polypeptide (By similarity).</text>
</comment>
<comment type="similarity">
    <text evidence="3">Belongs to the paramyxoviruses fusion glycoprotein family.</text>
</comment>
<feature type="signal peptide" evidence="2">
    <location>
        <begin position="1"/>
        <end position="23"/>
    </location>
</feature>
<feature type="chain" id="PRO_0000039339" description="Fusion glycoprotein F0">
    <location>
        <begin position="24"/>
        <end position="551"/>
    </location>
</feature>
<feature type="chain" id="PRO_0000039340" description="Fusion glycoprotein F2">
    <location>
        <begin position="24"/>
        <end position="106"/>
    </location>
</feature>
<feature type="chain" id="PRO_0000039341" description="Fusion glycoprotein F1">
    <location>
        <begin position="107"/>
        <end position="551"/>
    </location>
</feature>
<feature type="topological domain" description="Extracellular" evidence="1">
    <location>
        <begin position="24"/>
        <end position="492"/>
    </location>
</feature>
<feature type="transmembrane region" description="Helical" evidence="1">
    <location>
        <begin position="493"/>
        <end position="513"/>
    </location>
</feature>
<feature type="topological domain" description="Cytoplasmic" evidence="1">
    <location>
        <begin position="514"/>
        <end position="551"/>
    </location>
</feature>
<feature type="region of interest" description="Fusion peptide" evidence="1">
    <location>
        <begin position="107"/>
        <end position="131"/>
    </location>
</feature>
<feature type="coiled-coil region" evidence="2">
    <location>
        <begin position="132"/>
        <end position="160"/>
    </location>
</feature>
<feature type="coiled-coil region" evidence="2">
    <location>
        <begin position="456"/>
        <end position="481"/>
    </location>
</feature>
<feature type="site" description="Cleavage; by host" evidence="1">
    <location>
        <begin position="106"/>
        <end position="107"/>
    </location>
</feature>
<feature type="glycosylation site" description="N-linked (GlcNAc...) asparagine; by host" evidence="2">
    <location>
        <position position="65"/>
    </location>
</feature>
<feature type="glycosylation site" description="N-linked (GlcNAc...) asparagine; by host" evidence="2">
    <location>
        <position position="69"/>
    </location>
</feature>
<feature type="glycosylation site" description="N-linked (GlcNAc...) asparagine; by host" evidence="2">
    <location>
        <position position="77"/>
    </location>
</feature>
<feature type="glycosylation site" description="N-linked (GlcNAc...) asparagine; by host" evidence="2">
    <location>
        <position position="90"/>
    </location>
</feature>
<feature type="glycosylation site" description="N-linked (GlcNAc...) asparagine; by host" evidence="2">
    <location>
        <position position="431"/>
    </location>
</feature>
<feature type="glycosylation site" description="N-linked (GlcNAc...) asparagine; by host" evidence="2">
    <location>
        <position position="461"/>
    </location>
</feature>
<feature type="disulfide bond" description="Interchain (between F2 and F1 chains)" evidence="1">
    <location>
        <begin position="68"/>
        <end position="189"/>
    </location>
</feature>
<feature type="disulfide bond" evidence="1">
    <location>
        <begin position="328"/>
        <end position="337"/>
    </location>
</feature>
<feature type="disulfide bond" evidence="1">
    <location>
        <begin position="352"/>
        <end position="360"/>
    </location>
</feature>
<feature type="disulfide bond" evidence="1">
    <location>
        <begin position="384"/>
        <end position="389"/>
    </location>
</feature>
<feature type="disulfide bond" evidence="1">
    <location>
        <begin position="391"/>
        <end position="414"/>
    </location>
</feature>
<proteinExistence type="inferred from homology"/>